<proteinExistence type="inferred from homology"/>
<dbReference type="EMBL" id="X68796">
    <property type="protein sequence ID" value="CAA48701.1"/>
    <property type="molecule type" value="Genomic_DNA"/>
</dbReference>
<dbReference type="EMBL" id="AF195122">
    <property type="protein sequence ID" value="AAF24245.1"/>
    <property type="molecule type" value="Genomic_DNA"/>
</dbReference>
<dbReference type="EMBL" id="CP000143">
    <property type="protein sequence ID" value="ABA79491.1"/>
    <property type="molecule type" value="Genomic_DNA"/>
</dbReference>
<dbReference type="PIR" id="S28025">
    <property type="entry name" value="S28025"/>
</dbReference>
<dbReference type="RefSeq" id="WP_002720481.1">
    <property type="nucleotide sequence ID" value="NZ_CP030271.1"/>
</dbReference>
<dbReference type="RefSeq" id="YP_353392.1">
    <property type="nucleotide sequence ID" value="NC_007493.2"/>
</dbReference>
<dbReference type="SMR" id="Q02443"/>
<dbReference type="STRING" id="272943.RSP_0315"/>
<dbReference type="EnsemblBacteria" id="ABA79491">
    <property type="protein sequence ID" value="ABA79491"/>
    <property type="gene ID" value="RSP_0315"/>
</dbReference>
<dbReference type="GeneID" id="67447050"/>
<dbReference type="KEGG" id="rsp:RSP_0315"/>
<dbReference type="PATRIC" id="fig|272943.9.peg.2262"/>
<dbReference type="eggNOG" id="COG2814">
    <property type="taxonomic scope" value="Bacteria"/>
</dbReference>
<dbReference type="OrthoDB" id="8558818at2"/>
<dbReference type="PhylomeDB" id="Q02443"/>
<dbReference type="Proteomes" id="UP000002703">
    <property type="component" value="Chromosome 1"/>
</dbReference>
<dbReference type="GO" id="GO:0030076">
    <property type="term" value="C:light-harvesting complex"/>
    <property type="evidence" value="ECO:0007669"/>
    <property type="project" value="UniProtKB-KW"/>
</dbReference>
<dbReference type="GO" id="GO:0005886">
    <property type="term" value="C:plasma membrane"/>
    <property type="evidence" value="ECO:0007669"/>
    <property type="project" value="UniProtKB-SubCell"/>
</dbReference>
<dbReference type="CDD" id="cd06176">
    <property type="entry name" value="MFS_BCD_PucC-like"/>
    <property type="match status" value="1"/>
</dbReference>
<dbReference type="Gene3D" id="1.20.1250.20">
    <property type="entry name" value="MFS general substrate transporter like domains"/>
    <property type="match status" value="1"/>
</dbReference>
<dbReference type="InterPro" id="IPR036259">
    <property type="entry name" value="MFS_trans_sf"/>
</dbReference>
<dbReference type="InterPro" id="IPR026036">
    <property type="entry name" value="PucC"/>
</dbReference>
<dbReference type="InterPro" id="IPR004896">
    <property type="entry name" value="PucC-rel"/>
</dbReference>
<dbReference type="PANTHER" id="PTHR23538">
    <property type="entry name" value="44.5 KD BACTERIOCHLOROPHYLL SYNTHASE SUBUNIT"/>
    <property type="match status" value="1"/>
</dbReference>
<dbReference type="PANTHER" id="PTHR23538:SF1">
    <property type="entry name" value="44.5 KD BACTERIOCHLOROPHYLL SYNTHASE SUBUNIT"/>
    <property type="match status" value="1"/>
</dbReference>
<dbReference type="Pfam" id="PF03209">
    <property type="entry name" value="PUCC"/>
    <property type="match status" value="1"/>
</dbReference>
<dbReference type="PIRSF" id="PIRSF016565">
    <property type="entry name" value="PucC"/>
    <property type="match status" value="1"/>
</dbReference>
<dbReference type="SUPFAM" id="SSF103473">
    <property type="entry name" value="MFS general substrate transporter"/>
    <property type="match status" value="1"/>
</dbReference>
<gene>
    <name type="primary">pucC</name>
    <name type="ordered locus">RHOS4_19230</name>
    <name type="ORF">RSP_0315</name>
</gene>
<reference key="1">
    <citation type="journal article" date="1992" name="Mol. Microbiol.">
        <title>A putative anaerobic coproporphyrinogen III oxidase in Rhodobacter sphaeroides. II. Analysis of a region of the genome encoding hemF and the puc operon.</title>
        <authorList>
            <person name="Gibson L.C."/>
            <person name="McGlynn P."/>
            <person name="Chaudhri M."/>
            <person name="Hunter C.N."/>
        </authorList>
    </citation>
    <scope>NUCLEOTIDE SEQUENCE [GENOMIC DNA]</scope>
</reference>
<reference key="2">
    <citation type="journal article" date="2000" name="Nucleic Acids Res.">
        <title>DNA sequence analysis of the photosynthesis region of Rhodobacter sphaeroides 2.4.1.</title>
        <authorList>
            <person name="Choudhary M."/>
            <person name="Kaplan S."/>
        </authorList>
    </citation>
    <scope>NUCLEOTIDE SEQUENCE [GENOMIC DNA]</scope>
</reference>
<reference key="3">
    <citation type="submission" date="2005-09" db="EMBL/GenBank/DDBJ databases">
        <title>Complete sequence of chromosome 1 of Rhodobacter sphaeroides 2.4.1.</title>
        <authorList>
            <person name="Copeland A."/>
            <person name="Lucas S."/>
            <person name="Lapidus A."/>
            <person name="Barry K."/>
            <person name="Detter J.C."/>
            <person name="Glavina T."/>
            <person name="Hammon N."/>
            <person name="Israni S."/>
            <person name="Pitluck S."/>
            <person name="Richardson P."/>
            <person name="Mackenzie C."/>
            <person name="Choudhary M."/>
            <person name="Larimer F."/>
            <person name="Hauser L.J."/>
            <person name="Land M."/>
            <person name="Donohue T.J."/>
            <person name="Kaplan S."/>
        </authorList>
    </citation>
    <scope>NUCLEOTIDE SEQUENCE [LARGE SCALE GENOMIC DNA]</scope>
    <source>
        <strain>ATCC 17023 / DSM 158 / JCM 6121 / CCUG 31486 / LMG 2827 / NBRC 12203 / NCIMB 8253 / ATH 2.4.1.</strain>
    </source>
</reference>
<sequence>MSRIAEHLVRIGPRFLPFADAASDQLPLRKLLRLSLFQVAVGMAIVLLVGTLNRVMIVELKVPASVVGIMISLPLLFAPFRALIGFKSDTHVSALGWRRVPWIYRGTLALWGGFAIMPFALIVLGGQGYAEGQPFWLGVSSAALAFLMVGGGVHTIQTVGLALATDLAPREDQPKVVGLMYVVLLISMIFASIGFGWLLDPYYDAQLIKVISGVAVAVFFLNMIALWKMEPRNRAFTVKPEKEPEFGDHWREFISRENALHGLIVIGLGTLGFGMADVILEPYGGEVLSMTVAETTRLTATFAGGGLVGFWLASWVLGRGFDPLRMAFLGAAAGLPGFFAIMGATEMTNVWVFLLGTLVVGFGGGLFSHGTLTATMRLAPKEQVGLALGAWGAVQATAAGVAIAGAGVLRDILQAMPDLSGYGPGAPYVAVFALEAGFLFLTMIVILPLLRSALAARRL</sequence>
<name>PUCC_CERS4</name>
<organism>
    <name type="scientific">Cereibacter sphaeroides (strain ATCC 17023 / DSM 158 / JCM 6121 / CCUG 31486 / LMG 2827 / NBRC 12203 / NCIMB 8253 / ATH 2.4.1.)</name>
    <name type="common">Rhodobacter sphaeroides</name>
    <dbReference type="NCBI Taxonomy" id="272943"/>
    <lineage>
        <taxon>Bacteria</taxon>
        <taxon>Pseudomonadati</taxon>
        <taxon>Pseudomonadota</taxon>
        <taxon>Alphaproteobacteria</taxon>
        <taxon>Rhodobacterales</taxon>
        <taxon>Paracoccaceae</taxon>
        <taxon>Cereibacter</taxon>
    </lineage>
</organism>
<comment type="function">
    <text>PucC is required for high-level transcription of the puc operon.</text>
</comment>
<comment type="subcellular location">
    <subcellularLocation>
        <location evidence="2">Cell membrane</location>
        <topology evidence="2">Multi-pass membrane protein</topology>
    </subcellularLocation>
</comment>
<comment type="similarity">
    <text evidence="2">Belongs to the PucC family.</text>
</comment>
<evidence type="ECO:0000255" key="1"/>
<evidence type="ECO:0000305" key="2"/>
<feature type="chain" id="PRO_0000099845" description="Protein PucC">
    <location>
        <begin position="1"/>
        <end position="459"/>
    </location>
</feature>
<feature type="transmembrane region" description="Helical" evidence="1">
    <location>
        <begin position="31"/>
        <end position="51"/>
    </location>
</feature>
<feature type="transmembrane region" description="Helical" evidence="1">
    <location>
        <begin position="66"/>
        <end position="86"/>
    </location>
</feature>
<feature type="transmembrane region" description="Helical" evidence="1">
    <location>
        <begin position="106"/>
        <end position="126"/>
    </location>
</feature>
<feature type="transmembrane region" description="Helical" evidence="1">
    <location>
        <begin position="136"/>
        <end position="156"/>
    </location>
</feature>
<feature type="transmembrane region" description="Helical" evidence="1">
    <location>
        <begin position="179"/>
        <end position="199"/>
    </location>
</feature>
<feature type="transmembrane region" description="Helical" evidence="1">
    <location>
        <begin position="207"/>
        <end position="227"/>
    </location>
</feature>
<feature type="transmembrane region" description="Helical" evidence="1">
    <location>
        <begin position="260"/>
        <end position="280"/>
    </location>
</feature>
<feature type="transmembrane region" description="Helical" evidence="1">
    <location>
        <begin position="298"/>
        <end position="318"/>
    </location>
</feature>
<feature type="transmembrane region" description="Helical" evidence="1">
    <location>
        <begin position="327"/>
        <end position="347"/>
    </location>
</feature>
<feature type="transmembrane region" description="Helical" evidence="1">
    <location>
        <begin position="350"/>
        <end position="370"/>
    </location>
</feature>
<feature type="transmembrane region" description="Helical" evidence="1">
    <location>
        <begin position="384"/>
        <end position="404"/>
    </location>
</feature>
<feature type="transmembrane region" description="Helical" evidence="1">
    <location>
        <begin position="429"/>
        <end position="449"/>
    </location>
</feature>
<accession>Q02443</accession>
<accession>Q3J143</accession>
<keyword id="KW-0042">Antenna complex</keyword>
<keyword id="KW-1003">Cell membrane</keyword>
<keyword id="KW-0472">Membrane</keyword>
<keyword id="KW-1185">Reference proteome</keyword>
<keyword id="KW-0812">Transmembrane</keyword>
<keyword id="KW-1133">Transmembrane helix</keyword>
<protein>
    <recommendedName>
        <fullName>Protein PucC</fullName>
    </recommendedName>
</protein>